<proteinExistence type="inferred from homology"/>
<sequence>MNVFKVFCLMVLLGWQLPAMAERIKDVSMVEGVRSNQLVGYGLVVGLPGTGEQSRFTEQSFKGMLNSFGITLPASLKPKIKNVAAVAVHAELPPFRKPGQTIDITVSSIGSAGSLRGGTLLQTFLKGVDGNVYAIGQGSLIVGGLGAEGLDGSKVVINTPTVGRIPNGATVERAVKSPFMQNDYITFNLNRPDFTTAKRLEKTINDLVGPNSAQALDAASIRVIAPRDASQRVSYLSTLENLEFTPADTAAKIIVNSRTGTIVIGKNVKLQPAAITHGGLTVTIAEQLNVSQPNAFSDGDTVVTQQSIIDIKQDDSRAFVFNPGVSLDDLVRAINEVGAAPGDLMAILEALKEAGAINGQLVVI</sequence>
<evidence type="ECO:0000255" key="1">
    <source>
        <dbReference type="HAMAP-Rule" id="MF_00416"/>
    </source>
</evidence>
<keyword id="KW-0975">Bacterial flagellum</keyword>
<keyword id="KW-0574">Periplasm</keyword>
<keyword id="KW-1185">Reference proteome</keyword>
<keyword id="KW-0732">Signal</keyword>
<protein>
    <recommendedName>
        <fullName evidence="1">Flagellar P-ring protein</fullName>
    </recommendedName>
    <alternativeName>
        <fullName evidence="1">Basal body P-ring protein</fullName>
    </alternativeName>
</protein>
<dbReference type="EMBL" id="CR954246">
    <property type="protein sequence ID" value="CAI85858.1"/>
    <property type="molecule type" value="Genomic_DNA"/>
</dbReference>
<dbReference type="SMR" id="Q3IDW0"/>
<dbReference type="STRING" id="326442.PSHAa0776"/>
<dbReference type="KEGG" id="pha:PSHAa0776"/>
<dbReference type="PATRIC" id="fig|326442.8.peg.739"/>
<dbReference type="eggNOG" id="COG1706">
    <property type="taxonomic scope" value="Bacteria"/>
</dbReference>
<dbReference type="HOGENOM" id="CLU_045235_1_0_6"/>
<dbReference type="BioCyc" id="PHAL326442:PSHA_RS03785-MONOMER"/>
<dbReference type="Proteomes" id="UP000006843">
    <property type="component" value="Chromosome I"/>
</dbReference>
<dbReference type="GO" id="GO:0009428">
    <property type="term" value="C:bacterial-type flagellum basal body, distal rod, P ring"/>
    <property type="evidence" value="ECO:0007669"/>
    <property type="project" value="InterPro"/>
</dbReference>
<dbReference type="GO" id="GO:0030288">
    <property type="term" value="C:outer membrane-bounded periplasmic space"/>
    <property type="evidence" value="ECO:0007669"/>
    <property type="project" value="InterPro"/>
</dbReference>
<dbReference type="GO" id="GO:0005198">
    <property type="term" value="F:structural molecule activity"/>
    <property type="evidence" value="ECO:0007669"/>
    <property type="project" value="InterPro"/>
</dbReference>
<dbReference type="GO" id="GO:0071973">
    <property type="term" value="P:bacterial-type flagellum-dependent cell motility"/>
    <property type="evidence" value="ECO:0007669"/>
    <property type="project" value="InterPro"/>
</dbReference>
<dbReference type="HAMAP" id="MF_00416">
    <property type="entry name" value="FlgI"/>
    <property type="match status" value="1"/>
</dbReference>
<dbReference type="InterPro" id="IPR001782">
    <property type="entry name" value="Flag_FlgI"/>
</dbReference>
<dbReference type="NCBIfam" id="NF003676">
    <property type="entry name" value="PRK05303.1"/>
    <property type="match status" value="1"/>
</dbReference>
<dbReference type="PANTHER" id="PTHR30381">
    <property type="entry name" value="FLAGELLAR P-RING PERIPLASMIC PROTEIN FLGI"/>
    <property type="match status" value="1"/>
</dbReference>
<dbReference type="PANTHER" id="PTHR30381:SF0">
    <property type="entry name" value="FLAGELLAR P-RING PROTEIN"/>
    <property type="match status" value="1"/>
</dbReference>
<dbReference type="Pfam" id="PF02119">
    <property type="entry name" value="FlgI"/>
    <property type="match status" value="1"/>
</dbReference>
<dbReference type="PRINTS" id="PR01010">
    <property type="entry name" value="FLGPRINGFLGI"/>
</dbReference>
<organism>
    <name type="scientific">Pseudoalteromonas translucida (strain TAC 125)</name>
    <dbReference type="NCBI Taxonomy" id="326442"/>
    <lineage>
        <taxon>Bacteria</taxon>
        <taxon>Pseudomonadati</taxon>
        <taxon>Pseudomonadota</taxon>
        <taxon>Gammaproteobacteria</taxon>
        <taxon>Alteromonadales</taxon>
        <taxon>Pseudoalteromonadaceae</taxon>
        <taxon>Pseudoalteromonas</taxon>
    </lineage>
</organism>
<gene>
    <name evidence="1" type="primary">flgI</name>
    <name type="ordered locus">PSHAa0776</name>
</gene>
<name>FLGI_PSET1</name>
<accession>Q3IDW0</accession>
<feature type="signal peptide" evidence="1">
    <location>
        <begin position="1"/>
        <end position="21"/>
    </location>
</feature>
<feature type="chain" id="PRO_0000236309" description="Flagellar P-ring protein">
    <location>
        <begin position="22"/>
        <end position="364"/>
    </location>
</feature>
<reference key="1">
    <citation type="journal article" date="2005" name="Genome Res.">
        <title>Coping with cold: the genome of the versatile marine Antarctica bacterium Pseudoalteromonas haloplanktis TAC125.</title>
        <authorList>
            <person name="Medigue C."/>
            <person name="Krin E."/>
            <person name="Pascal G."/>
            <person name="Barbe V."/>
            <person name="Bernsel A."/>
            <person name="Bertin P.N."/>
            <person name="Cheung F."/>
            <person name="Cruveiller S."/>
            <person name="D'Amico S."/>
            <person name="Duilio A."/>
            <person name="Fang G."/>
            <person name="Feller G."/>
            <person name="Ho C."/>
            <person name="Mangenot S."/>
            <person name="Marino G."/>
            <person name="Nilsson J."/>
            <person name="Parrilli E."/>
            <person name="Rocha E.P.C."/>
            <person name="Rouy Z."/>
            <person name="Sekowska A."/>
            <person name="Tutino M.L."/>
            <person name="Vallenet D."/>
            <person name="von Heijne G."/>
            <person name="Danchin A."/>
        </authorList>
    </citation>
    <scope>NUCLEOTIDE SEQUENCE [LARGE SCALE GENOMIC DNA]</scope>
    <source>
        <strain>TAC 125</strain>
    </source>
</reference>
<comment type="function">
    <text evidence="1">Assembles around the rod to form the L-ring and probably protects the motor/basal body from shearing forces during rotation.</text>
</comment>
<comment type="subunit">
    <text evidence="1">The basal body constitutes a major portion of the flagellar organelle and consists of four rings (L,P,S, and M) mounted on a central rod.</text>
</comment>
<comment type="subcellular location">
    <subcellularLocation>
        <location evidence="1">Periplasm</location>
    </subcellularLocation>
    <subcellularLocation>
        <location evidence="1">Bacterial flagellum basal body</location>
    </subcellularLocation>
</comment>
<comment type="similarity">
    <text evidence="1">Belongs to the FlgI family.</text>
</comment>